<keyword id="KW-0067">ATP-binding</keyword>
<keyword id="KW-0963">Cytoplasm</keyword>
<keyword id="KW-0347">Helicase</keyword>
<keyword id="KW-0378">Hydrolase</keyword>
<keyword id="KW-0396">Initiation factor</keyword>
<keyword id="KW-0547">Nucleotide-binding</keyword>
<keyword id="KW-0648">Protein biosynthesis</keyword>
<keyword id="KW-1185">Reference proteome</keyword>
<keyword id="KW-0694">RNA-binding</keyword>
<dbReference type="EC" id="3.6.4.13"/>
<dbReference type="EMBL" id="AY083607">
    <property type="protein sequence ID" value="AAM08102.1"/>
    <property type="molecule type" value="Genomic_DNA"/>
</dbReference>
<dbReference type="EMBL" id="CR380958">
    <property type="protein sequence ID" value="CAG61868.1"/>
    <property type="molecule type" value="Genomic_DNA"/>
</dbReference>
<dbReference type="RefSeq" id="XP_448898.1">
    <property type="nucleotide sequence ID" value="XM_448898.1"/>
</dbReference>
<dbReference type="SMR" id="Q8TFK8"/>
<dbReference type="FunCoup" id="Q8TFK8">
    <property type="interactions" value="1346"/>
</dbReference>
<dbReference type="STRING" id="284593.Q8TFK8"/>
<dbReference type="EnsemblFungi" id="CAGL0L02915g-T">
    <property type="protein sequence ID" value="CAGL0L02915g-T-p1"/>
    <property type="gene ID" value="CAGL0L02915g"/>
</dbReference>
<dbReference type="KEGG" id="cgr:2890837"/>
<dbReference type="CGD" id="CAL0135394">
    <property type="gene designation" value="CAGL0L02915g"/>
</dbReference>
<dbReference type="VEuPathDB" id="FungiDB:B1J91_L02915g"/>
<dbReference type="VEuPathDB" id="FungiDB:CAGL0L02915g"/>
<dbReference type="eggNOG" id="KOG0335">
    <property type="taxonomic scope" value="Eukaryota"/>
</dbReference>
<dbReference type="HOGENOM" id="CLU_003041_16_3_1"/>
<dbReference type="InParanoid" id="Q8TFK8"/>
<dbReference type="OMA" id="ISGNDRW"/>
<dbReference type="Proteomes" id="UP000002428">
    <property type="component" value="Chromosome L"/>
</dbReference>
<dbReference type="GO" id="GO:0005737">
    <property type="term" value="C:cytoplasm"/>
    <property type="evidence" value="ECO:0007669"/>
    <property type="project" value="UniProtKB-SubCell"/>
</dbReference>
<dbReference type="GO" id="GO:0005524">
    <property type="term" value="F:ATP binding"/>
    <property type="evidence" value="ECO:0007669"/>
    <property type="project" value="UniProtKB-KW"/>
</dbReference>
<dbReference type="GO" id="GO:0016887">
    <property type="term" value="F:ATP hydrolysis activity"/>
    <property type="evidence" value="ECO:0007669"/>
    <property type="project" value="RHEA"/>
</dbReference>
<dbReference type="GO" id="GO:0003723">
    <property type="term" value="F:RNA binding"/>
    <property type="evidence" value="ECO:0007669"/>
    <property type="project" value="UniProtKB-KW"/>
</dbReference>
<dbReference type="GO" id="GO:0003724">
    <property type="term" value="F:RNA helicase activity"/>
    <property type="evidence" value="ECO:0007669"/>
    <property type="project" value="UniProtKB-EC"/>
</dbReference>
<dbReference type="GO" id="GO:0003743">
    <property type="term" value="F:translation initiation factor activity"/>
    <property type="evidence" value="ECO:0007669"/>
    <property type="project" value="UniProtKB-KW"/>
</dbReference>
<dbReference type="CDD" id="cd18787">
    <property type="entry name" value="SF2_C_DEAD"/>
    <property type="match status" value="1"/>
</dbReference>
<dbReference type="FunFam" id="3.40.50.300:FF:000160">
    <property type="entry name" value="ATP-dependent RNA helicase DDX3X"/>
    <property type="match status" value="1"/>
</dbReference>
<dbReference type="FunFam" id="3.40.50.300:FF:000008">
    <property type="entry name" value="ATP-dependent RNA helicase RhlB"/>
    <property type="match status" value="1"/>
</dbReference>
<dbReference type="Gene3D" id="3.40.50.300">
    <property type="entry name" value="P-loop containing nucleotide triphosphate hydrolases"/>
    <property type="match status" value="2"/>
</dbReference>
<dbReference type="InterPro" id="IPR011545">
    <property type="entry name" value="DEAD/DEAH_box_helicase_dom"/>
</dbReference>
<dbReference type="InterPro" id="IPR014001">
    <property type="entry name" value="Helicase_ATP-bd"/>
</dbReference>
<dbReference type="InterPro" id="IPR001650">
    <property type="entry name" value="Helicase_C-like"/>
</dbReference>
<dbReference type="InterPro" id="IPR027417">
    <property type="entry name" value="P-loop_NTPase"/>
</dbReference>
<dbReference type="InterPro" id="IPR000629">
    <property type="entry name" value="RNA-helicase_DEAD-box_CS"/>
</dbReference>
<dbReference type="InterPro" id="IPR014014">
    <property type="entry name" value="RNA_helicase_DEAD_Q_motif"/>
</dbReference>
<dbReference type="PANTHER" id="PTHR47958">
    <property type="entry name" value="ATP-DEPENDENT RNA HELICASE DBP3"/>
    <property type="match status" value="1"/>
</dbReference>
<dbReference type="Pfam" id="PF00270">
    <property type="entry name" value="DEAD"/>
    <property type="match status" value="1"/>
</dbReference>
<dbReference type="Pfam" id="PF00271">
    <property type="entry name" value="Helicase_C"/>
    <property type="match status" value="1"/>
</dbReference>
<dbReference type="SMART" id="SM00487">
    <property type="entry name" value="DEXDc"/>
    <property type="match status" value="1"/>
</dbReference>
<dbReference type="SMART" id="SM00490">
    <property type="entry name" value="HELICc"/>
    <property type="match status" value="1"/>
</dbReference>
<dbReference type="SUPFAM" id="SSF52540">
    <property type="entry name" value="P-loop containing nucleoside triphosphate hydrolases"/>
    <property type="match status" value="1"/>
</dbReference>
<dbReference type="PROSITE" id="PS00039">
    <property type="entry name" value="DEAD_ATP_HELICASE"/>
    <property type="match status" value="1"/>
</dbReference>
<dbReference type="PROSITE" id="PS51192">
    <property type="entry name" value="HELICASE_ATP_BIND_1"/>
    <property type="match status" value="1"/>
</dbReference>
<dbReference type="PROSITE" id="PS51194">
    <property type="entry name" value="HELICASE_CTER"/>
    <property type="match status" value="1"/>
</dbReference>
<dbReference type="PROSITE" id="PS51195">
    <property type="entry name" value="Q_MOTIF"/>
    <property type="match status" value="1"/>
</dbReference>
<accession>Q8TFK8</accession>
<accession>Q6FLJ6</accession>
<name>DED1_CANGA</name>
<sequence>MTELAEQVSMPEGQQRRGGYVPPHIRNGGGRRGDSAPRGGFNNGGGRGGFFRNNGDRGGFGFGGRGGGFGGNRGGFGGNRGGFGGGMRGRWVDGKHVPGQRNERIELELFGAPEDPSFQSSGINFDNYDDIPVEASGEDVPEAITEFTSPPLDSLLLENIKLARFTKPTPVQKYSVPIVSKGRDLMACAQTGSGKTGGFLFPVLSESFLTGPAEKAANDGYSYQRKAFPTAVVMAPTRELATQIFDEAKKFCYRSWVKPCVVYGGAPIGNQMREMDHGCDLLVATPGRLNDLLERGKVSLSNVKYLVLDEADRMLDMGFEPQIRHIVEDCDMPPTGERQTLMFSATFPHDIQHLARDFLHDYIFLSVGRVGSTSENITQRILYVENRDKNSALLDLLAASNDNLTLIFVETKRMADQLTDFLIMQNFSATAIHGDRSQAERERALAAFRSGRANILVATAVAARGLDIPNVTHVINYDLPSDVDDYVHRIGRTGRAGNTGVATAFFNRDNNNIVKGLYEILEEANQEIPPFLEDCLREVSFSRSGSNRSTRGNRSSNTRDYRKHGGNGSFGQNSRNSSWGSARGGGFGGSTGGWGNDRAGGSAGGWGASNTKTSSWW</sequence>
<proteinExistence type="inferred from homology"/>
<feature type="chain" id="PRO_0000232156" description="ATP-dependent RNA helicase DED1">
    <location>
        <begin position="1"/>
        <end position="617"/>
    </location>
</feature>
<feature type="domain" description="Helicase ATP-binding" evidence="2">
    <location>
        <begin position="176"/>
        <end position="365"/>
    </location>
</feature>
<feature type="domain" description="Helicase C-terminal" evidence="3">
    <location>
        <begin position="376"/>
        <end position="536"/>
    </location>
</feature>
<feature type="region of interest" description="Disordered" evidence="4">
    <location>
        <begin position="1"/>
        <end position="53"/>
    </location>
</feature>
<feature type="region of interest" description="Disordered" evidence="4">
    <location>
        <begin position="543"/>
        <end position="617"/>
    </location>
</feature>
<feature type="short sequence motif" description="Q motif">
    <location>
        <begin position="145"/>
        <end position="173"/>
    </location>
</feature>
<feature type="short sequence motif" description="DEAD box">
    <location>
        <begin position="309"/>
        <end position="312"/>
    </location>
</feature>
<feature type="compositionally biased region" description="Low complexity" evidence="4">
    <location>
        <begin position="543"/>
        <end position="558"/>
    </location>
</feature>
<feature type="compositionally biased region" description="Gly residues" evidence="4">
    <location>
        <begin position="582"/>
        <end position="595"/>
    </location>
</feature>
<feature type="binding site" evidence="2">
    <location>
        <begin position="189"/>
        <end position="196"/>
    </location>
    <ligand>
        <name>ATP</name>
        <dbReference type="ChEBI" id="CHEBI:30616"/>
    </ligand>
</feature>
<protein>
    <recommendedName>
        <fullName>ATP-dependent RNA helicase DED1</fullName>
        <ecNumber>3.6.4.13</ecNumber>
    </recommendedName>
</protein>
<gene>
    <name type="primary">DED1</name>
    <name type="ordered locus">CAGL0L02915g</name>
</gene>
<organism>
    <name type="scientific">Candida glabrata (strain ATCC 2001 / BCRC 20586 / JCM 3761 / NBRC 0622 / NRRL Y-65 / CBS 138)</name>
    <name type="common">Yeast</name>
    <name type="synonym">Nakaseomyces glabratus</name>
    <dbReference type="NCBI Taxonomy" id="284593"/>
    <lineage>
        <taxon>Eukaryota</taxon>
        <taxon>Fungi</taxon>
        <taxon>Dikarya</taxon>
        <taxon>Ascomycota</taxon>
        <taxon>Saccharomycotina</taxon>
        <taxon>Saccharomycetes</taxon>
        <taxon>Saccharomycetales</taxon>
        <taxon>Saccharomycetaceae</taxon>
        <taxon>Nakaseomyces</taxon>
    </lineage>
</organism>
<comment type="function">
    <text evidence="1">ATP-binding RNA helicase involved in translation initiation. Remodels RNA in response to ADP and ATP concentrations by facilitating disruption, but also formation of RNA duplexes (By similarity).</text>
</comment>
<comment type="catalytic activity">
    <reaction>
        <text>ATP + H2O = ADP + phosphate + H(+)</text>
        <dbReference type="Rhea" id="RHEA:13065"/>
        <dbReference type="ChEBI" id="CHEBI:15377"/>
        <dbReference type="ChEBI" id="CHEBI:15378"/>
        <dbReference type="ChEBI" id="CHEBI:30616"/>
        <dbReference type="ChEBI" id="CHEBI:43474"/>
        <dbReference type="ChEBI" id="CHEBI:456216"/>
        <dbReference type="EC" id="3.6.4.13"/>
    </reaction>
</comment>
<comment type="subcellular location">
    <subcellularLocation>
        <location evidence="1">Cytoplasm</location>
    </subcellularLocation>
</comment>
<comment type="domain">
    <text>The Q motif is unique to and characteristic of the DEAD box family of RNA helicases and controls ATP binding and hydrolysis.</text>
</comment>
<comment type="similarity">
    <text evidence="5">Belongs to the DEAD box helicase family. DDX3/DED1 subfamily.</text>
</comment>
<evidence type="ECO:0000250" key="1"/>
<evidence type="ECO:0000255" key="2">
    <source>
        <dbReference type="PROSITE-ProRule" id="PRU00541"/>
    </source>
</evidence>
<evidence type="ECO:0000255" key="3">
    <source>
        <dbReference type="PROSITE-ProRule" id="PRU00542"/>
    </source>
</evidence>
<evidence type="ECO:0000256" key="4">
    <source>
        <dbReference type="SAM" id="MobiDB-lite"/>
    </source>
</evidence>
<evidence type="ECO:0000305" key="5"/>
<reference key="1">
    <citation type="journal article" date="2002" name="Yeast">
        <title>Genomic differences between Candida glabrata and Saccharomyces cerevisiae around the MRPL28 and GCN3 loci.</title>
        <authorList>
            <person name="Walsh D.W."/>
            <person name="Wolfe K.H."/>
            <person name="Butler G."/>
        </authorList>
    </citation>
    <scope>NUCLEOTIDE SEQUENCE [GENOMIC DNA]</scope>
    <source>
        <strain>ATCC 2001 / BCRC 20586 / JCM 3761 / NBRC 0622 / NRRL Y-65 / CBS 138</strain>
    </source>
</reference>
<reference key="2">
    <citation type="journal article" date="2004" name="Nature">
        <title>Genome evolution in yeasts.</title>
        <authorList>
            <person name="Dujon B."/>
            <person name="Sherman D."/>
            <person name="Fischer G."/>
            <person name="Durrens P."/>
            <person name="Casaregola S."/>
            <person name="Lafontaine I."/>
            <person name="de Montigny J."/>
            <person name="Marck C."/>
            <person name="Neuveglise C."/>
            <person name="Talla E."/>
            <person name="Goffard N."/>
            <person name="Frangeul L."/>
            <person name="Aigle M."/>
            <person name="Anthouard V."/>
            <person name="Babour A."/>
            <person name="Barbe V."/>
            <person name="Barnay S."/>
            <person name="Blanchin S."/>
            <person name="Beckerich J.-M."/>
            <person name="Beyne E."/>
            <person name="Bleykasten C."/>
            <person name="Boisrame A."/>
            <person name="Boyer J."/>
            <person name="Cattolico L."/>
            <person name="Confanioleri F."/>
            <person name="de Daruvar A."/>
            <person name="Despons L."/>
            <person name="Fabre E."/>
            <person name="Fairhead C."/>
            <person name="Ferry-Dumazet H."/>
            <person name="Groppi A."/>
            <person name="Hantraye F."/>
            <person name="Hennequin C."/>
            <person name="Jauniaux N."/>
            <person name="Joyet P."/>
            <person name="Kachouri R."/>
            <person name="Kerrest A."/>
            <person name="Koszul R."/>
            <person name="Lemaire M."/>
            <person name="Lesur I."/>
            <person name="Ma L."/>
            <person name="Muller H."/>
            <person name="Nicaud J.-M."/>
            <person name="Nikolski M."/>
            <person name="Oztas S."/>
            <person name="Ozier-Kalogeropoulos O."/>
            <person name="Pellenz S."/>
            <person name="Potier S."/>
            <person name="Richard G.-F."/>
            <person name="Straub M.-L."/>
            <person name="Suleau A."/>
            <person name="Swennen D."/>
            <person name="Tekaia F."/>
            <person name="Wesolowski-Louvel M."/>
            <person name="Westhof E."/>
            <person name="Wirth B."/>
            <person name="Zeniou-Meyer M."/>
            <person name="Zivanovic Y."/>
            <person name="Bolotin-Fukuhara M."/>
            <person name="Thierry A."/>
            <person name="Bouchier C."/>
            <person name="Caudron B."/>
            <person name="Scarpelli C."/>
            <person name="Gaillardin C."/>
            <person name="Weissenbach J."/>
            <person name="Wincker P."/>
            <person name="Souciet J.-L."/>
        </authorList>
    </citation>
    <scope>NUCLEOTIDE SEQUENCE [LARGE SCALE GENOMIC DNA]</scope>
    <source>
        <strain>ATCC 2001 / BCRC 20586 / JCM 3761 / NBRC 0622 / NRRL Y-65 / CBS 138</strain>
    </source>
</reference>